<feature type="chain" id="PRO_0000380973" description="8-amino-7-oxononanoate synthase">
    <location>
        <begin position="1"/>
        <end position="384"/>
    </location>
</feature>
<feature type="binding site" evidence="1">
    <location>
        <position position="21"/>
    </location>
    <ligand>
        <name>substrate</name>
    </ligand>
</feature>
<feature type="binding site" evidence="1">
    <location>
        <begin position="108"/>
        <end position="109"/>
    </location>
    <ligand>
        <name>pyridoxal 5'-phosphate</name>
        <dbReference type="ChEBI" id="CHEBI:597326"/>
    </ligand>
</feature>
<feature type="binding site" evidence="1">
    <location>
        <position position="133"/>
    </location>
    <ligand>
        <name>substrate</name>
    </ligand>
</feature>
<feature type="binding site" evidence="1">
    <location>
        <position position="179"/>
    </location>
    <ligand>
        <name>pyridoxal 5'-phosphate</name>
        <dbReference type="ChEBI" id="CHEBI:597326"/>
    </ligand>
</feature>
<feature type="binding site" evidence="1">
    <location>
        <position position="207"/>
    </location>
    <ligand>
        <name>pyridoxal 5'-phosphate</name>
        <dbReference type="ChEBI" id="CHEBI:597326"/>
    </ligand>
</feature>
<feature type="binding site" evidence="1">
    <location>
        <position position="233"/>
    </location>
    <ligand>
        <name>pyridoxal 5'-phosphate</name>
        <dbReference type="ChEBI" id="CHEBI:597326"/>
    </ligand>
</feature>
<feature type="binding site" evidence="1">
    <location>
        <position position="352"/>
    </location>
    <ligand>
        <name>substrate</name>
    </ligand>
</feature>
<feature type="modified residue" description="N6-(pyridoxal phosphate)lysine" evidence="1">
    <location>
        <position position="236"/>
    </location>
</feature>
<comment type="function">
    <text evidence="1">Catalyzes the decarboxylative condensation of pimeloyl-[acyl-carrier protein] and L-alanine to produce 8-amino-7-oxononanoate (AON), [acyl-carrier protein], and carbon dioxide.</text>
</comment>
<comment type="catalytic activity">
    <reaction evidence="1">
        <text>6-carboxyhexanoyl-[ACP] + L-alanine + H(+) = (8S)-8-amino-7-oxononanoate + holo-[ACP] + CO2</text>
        <dbReference type="Rhea" id="RHEA:42288"/>
        <dbReference type="Rhea" id="RHEA-COMP:9685"/>
        <dbReference type="Rhea" id="RHEA-COMP:9955"/>
        <dbReference type="ChEBI" id="CHEBI:15378"/>
        <dbReference type="ChEBI" id="CHEBI:16526"/>
        <dbReference type="ChEBI" id="CHEBI:57972"/>
        <dbReference type="ChEBI" id="CHEBI:64479"/>
        <dbReference type="ChEBI" id="CHEBI:78846"/>
        <dbReference type="ChEBI" id="CHEBI:149468"/>
        <dbReference type="EC" id="2.3.1.47"/>
    </reaction>
</comment>
<comment type="cofactor">
    <cofactor evidence="1">
        <name>pyridoxal 5'-phosphate</name>
        <dbReference type="ChEBI" id="CHEBI:597326"/>
    </cofactor>
</comment>
<comment type="pathway">
    <text evidence="1">Cofactor biosynthesis; biotin biosynthesis.</text>
</comment>
<comment type="subunit">
    <text evidence="1">Homodimer.</text>
</comment>
<comment type="similarity">
    <text evidence="1">Belongs to the class-II pyridoxal-phosphate-dependent aminotransferase family. BioF subfamily.</text>
</comment>
<keyword id="KW-0093">Biotin biosynthesis</keyword>
<keyword id="KW-0663">Pyridoxal phosphate</keyword>
<keyword id="KW-0808">Transferase</keyword>
<dbReference type="EC" id="2.3.1.47" evidence="1"/>
<dbReference type="EMBL" id="CU928164">
    <property type="protein sequence ID" value="CAR16889.1"/>
    <property type="molecule type" value="Genomic_DNA"/>
</dbReference>
<dbReference type="RefSeq" id="WP_000118791.1">
    <property type="nucleotide sequence ID" value="NC_011750.1"/>
</dbReference>
<dbReference type="RefSeq" id="YP_002406777.1">
    <property type="nucleotide sequence ID" value="NC_011750.1"/>
</dbReference>
<dbReference type="SMR" id="B7NNK6"/>
<dbReference type="STRING" id="585057.ECIAI39_0752"/>
<dbReference type="KEGG" id="ect:ECIAI39_0752"/>
<dbReference type="PATRIC" id="fig|585057.6.peg.795"/>
<dbReference type="HOGENOM" id="CLU_015846_11_2_6"/>
<dbReference type="UniPathway" id="UPA00078"/>
<dbReference type="Proteomes" id="UP000000749">
    <property type="component" value="Chromosome"/>
</dbReference>
<dbReference type="GO" id="GO:0008710">
    <property type="term" value="F:8-amino-7-oxononanoate synthase activity"/>
    <property type="evidence" value="ECO:0007669"/>
    <property type="project" value="UniProtKB-UniRule"/>
</dbReference>
<dbReference type="GO" id="GO:0030170">
    <property type="term" value="F:pyridoxal phosphate binding"/>
    <property type="evidence" value="ECO:0007669"/>
    <property type="project" value="UniProtKB-UniRule"/>
</dbReference>
<dbReference type="GO" id="GO:0009102">
    <property type="term" value="P:biotin biosynthetic process"/>
    <property type="evidence" value="ECO:0007669"/>
    <property type="project" value="UniProtKB-UniRule"/>
</dbReference>
<dbReference type="CDD" id="cd06454">
    <property type="entry name" value="KBL_like"/>
    <property type="match status" value="1"/>
</dbReference>
<dbReference type="FunFam" id="3.40.640.10:FF:000095">
    <property type="entry name" value="8-amino-7-oxononanoate synthase"/>
    <property type="match status" value="1"/>
</dbReference>
<dbReference type="FunFam" id="3.90.1150.10:FF:000036">
    <property type="entry name" value="8-amino-7-oxononanoate synthase"/>
    <property type="match status" value="1"/>
</dbReference>
<dbReference type="Gene3D" id="3.90.1150.10">
    <property type="entry name" value="Aspartate Aminotransferase, domain 1"/>
    <property type="match status" value="1"/>
</dbReference>
<dbReference type="Gene3D" id="3.40.640.10">
    <property type="entry name" value="Type I PLP-dependent aspartate aminotransferase-like (Major domain)"/>
    <property type="match status" value="1"/>
</dbReference>
<dbReference type="HAMAP" id="MF_01693">
    <property type="entry name" value="BioF_aminotrans_2"/>
    <property type="match status" value="1"/>
</dbReference>
<dbReference type="InterPro" id="IPR001917">
    <property type="entry name" value="Aminotrans_II_pyridoxalP_BS"/>
</dbReference>
<dbReference type="InterPro" id="IPR004839">
    <property type="entry name" value="Aminotransferase_I/II_large"/>
</dbReference>
<dbReference type="InterPro" id="IPR050087">
    <property type="entry name" value="AON_synthase_class-II"/>
</dbReference>
<dbReference type="InterPro" id="IPR004723">
    <property type="entry name" value="AONS_Archaea/Proteobacteria"/>
</dbReference>
<dbReference type="InterPro" id="IPR022834">
    <property type="entry name" value="AONS_Proteobacteria"/>
</dbReference>
<dbReference type="InterPro" id="IPR015424">
    <property type="entry name" value="PyrdxlP-dep_Trfase"/>
</dbReference>
<dbReference type="InterPro" id="IPR015421">
    <property type="entry name" value="PyrdxlP-dep_Trfase_major"/>
</dbReference>
<dbReference type="InterPro" id="IPR015422">
    <property type="entry name" value="PyrdxlP-dep_Trfase_small"/>
</dbReference>
<dbReference type="NCBIfam" id="TIGR00858">
    <property type="entry name" value="bioF"/>
    <property type="match status" value="1"/>
</dbReference>
<dbReference type="PANTHER" id="PTHR13693:SF100">
    <property type="entry name" value="8-AMINO-7-OXONONANOATE SYNTHASE"/>
    <property type="match status" value="1"/>
</dbReference>
<dbReference type="PANTHER" id="PTHR13693">
    <property type="entry name" value="CLASS II AMINOTRANSFERASE/8-AMINO-7-OXONONANOATE SYNTHASE"/>
    <property type="match status" value="1"/>
</dbReference>
<dbReference type="Pfam" id="PF00155">
    <property type="entry name" value="Aminotran_1_2"/>
    <property type="match status" value="1"/>
</dbReference>
<dbReference type="SUPFAM" id="SSF53383">
    <property type="entry name" value="PLP-dependent transferases"/>
    <property type="match status" value="1"/>
</dbReference>
<dbReference type="PROSITE" id="PS00599">
    <property type="entry name" value="AA_TRANSFER_CLASS_2"/>
    <property type="match status" value="1"/>
</dbReference>
<protein>
    <recommendedName>
        <fullName evidence="1">8-amino-7-oxononanoate synthase</fullName>
        <shortName evidence="1">AONS</shortName>
        <ecNumber evidence="1">2.3.1.47</ecNumber>
    </recommendedName>
    <alternativeName>
        <fullName evidence="1">7-keto-8-amino-pelargonic acid synthase</fullName>
        <shortName evidence="1">7-KAP synthase</shortName>
        <shortName evidence="1">KAPA synthase</shortName>
    </alternativeName>
    <alternativeName>
        <fullName evidence="1">8-amino-7-ketopelargonate synthase</fullName>
    </alternativeName>
</protein>
<organism>
    <name type="scientific">Escherichia coli O7:K1 (strain IAI39 / ExPEC)</name>
    <dbReference type="NCBI Taxonomy" id="585057"/>
    <lineage>
        <taxon>Bacteria</taxon>
        <taxon>Pseudomonadati</taxon>
        <taxon>Pseudomonadota</taxon>
        <taxon>Gammaproteobacteria</taxon>
        <taxon>Enterobacterales</taxon>
        <taxon>Enterobacteriaceae</taxon>
        <taxon>Escherichia</taxon>
    </lineage>
</organism>
<reference key="1">
    <citation type="journal article" date="2009" name="PLoS Genet.">
        <title>Organised genome dynamics in the Escherichia coli species results in highly diverse adaptive paths.</title>
        <authorList>
            <person name="Touchon M."/>
            <person name="Hoede C."/>
            <person name="Tenaillon O."/>
            <person name="Barbe V."/>
            <person name="Baeriswyl S."/>
            <person name="Bidet P."/>
            <person name="Bingen E."/>
            <person name="Bonacorsi S."/>
            <person name="Bouchier C."/>
            <person name="Bouvet O."/>
            <person name="Calteau A."/>
            <person name="Chiapello H."/>
            <person name="Clermont O."/>
            <person name="Cruveiller S."/>
            <person name="Danchin A."/>
            <person name="Diard M."/>
            <person name="Dossat C."/>
            <person name="Karoui M.E."/>
            <person name="Frapy E."/>
            <person name="Garry L."/>
            <person name="Ghigo J.M."/>
            <person name="Gilles A.M."/>
            <person name="Johnson J."/>
            <person name="Le Bouguenec C."/>
            <person name="Lescat M."/>
            <person name="Mangenot S."/>
            <person name="Martinez-Jehanne V."/>
            <person name="Matic I."/>
            <person name="Nassif X."/>
            <person name="Oztas S."/>
            <person name="Petit M.A."/>
            <person name="Pichon C."/>
            <person name="Rouy Z."/>
            <person name="Ruf C.S."/>
            <person name="Schneider D."/>
            <person name="Tourret J."/>
            <person name="Vacherie B."/>
            <person name="Vallenet D."/>
            <person name="Medigue C."/>
            <person name="Rocha E.P.C."/>
            <person name="Denamur E."/>
        </authorList>
    </citation>
    <scope>NUCLEOTIDE SEQUENCE [LARGE SCALE GENOMIC DNA]</scope>
    <source>
        <strain>IAI39 / ExPEC</strain>
    </source>
</reference>
<accession>B7NNK6</accession>
<evidence type="ECO:0000255" key="1">
    <source>
        <dbReference type="HAMAP-Rule" id="MF_01693"/>
    </source>
</evidence>
<name>BIOF_ECO7I</name>
<proteinExistence type="inferred from homology"/>
<sequence length="384" mass="41688">MSWQDKINAALDARRAADALRRRYPVAQGAGRWLVADDRQYLNFSSNDYLGLSHHPQIIRAWKLGAEQFGVGSGGSGHVSGYSVAHQVLEEELAEWLGYSRALLFISGFAANQAVIAAMMAKEDRIVADRLSHASLLEAASLSPSPLRRFAHNDVTHLARLLASPCPGQQLVVTEGVFSMDGDSAPLEEIQQVTQQHDGWLMVDDAHGTGVIGEQGRGSCWLQKVKPELLVVTFGKGFGVSGAAVLCSNTVADYLLQFARHLIYSTSMPPAQAQALRASLAVIRSDEGDARREKLVSLIARFRAGVQDLPFTLADSCSAIQPLIVGDNSRALQLAEKLRQQGCWVTAIRPPTVPAGTARLRLTLTAAHEMQDIDRLLEVLHGND</sequence>
<gene>
    <name evidence="1" type="primary">bioF</name>
    <name type="ordered locus">ECIAI39_0752</name>
</gene>